<sequence>MIQQESRLKVADNTGAKEILCIRVLGGSSRRYASIGDVIVGTVKDAIPGGNVKRGDVVKAVVVRTAKECRRPDGSYIKFDENAAVIIKPDNDPRGTRIFGPVGRELREKRFMKIISLAPEVL</sequence>
<name>RL14_MYCLE</name>
<feature type="chain" id="PRO_0000128552" description="Large ribosomal subunit protein uL14">
    <location>
        <begin position="1"/>
        <end position="122"/>
    </location>
</feature>
<evidence type="ECO:0000255" key="1">
    <source>
        <dbReference type="HAMAP-Rule" id="MF_01367"/>
    </source>
</evidence>
<evidence type="ECO:0000305" key="2"/>
<organism>
    <name type="scientific">Mycobacterium leprae (strain TN)</name>
    <dbReference type="NCBI Taxonomy" id="272631"/>
    <lineage>
        <taxon>Bacteria</taxon>
        <taxon>Bacillati</taxon>
        <taxon>Actinomycetota</taxon>
        <taxon>Actinomycetes</taxon>
        <taxon>Mycobacteriales</taxon>
        <taxon>Mycobacteriaceae</taxon>
        <taxon>Mycobacterium</taxon>
    </lineage>
</organism>
<proteinExistence type="inferred from homology"/>
<comment type="function">
    <text evidence="1">Binds to 23S rRNA. Forms part of two intersubunit bridges in the 70S ribosome.</text>
</comment>
<comment type="subunit">
    <text evidence="1">Part of the 50S ribosomal subunit. Forms a cluster with proteins L3 and L19. In the 70S ribosome, L14 and L19 interact and together make contacts with the 16S rRNA in bridges B5 and B8.</text>
</comment>
<comment type="similarity">
    <text evidence="1">Belongs to the universal ribosomal protein uL14 family.</text>
</comment>
<comment type="sequence caution" evidence="2">
    <conflict type="erroneous initiation">
        <sequence resource="EMBL-CDS" id="CAC30803"/>
    </conflict>
</comment>
<protein>
    <recommendedName>
        <fullName evidence="1">Large ribosomal subunit protein uL14</fullName>
    </recommendedName>
    <alternativeName>
        <fullName evidence="2">50S ribosomal protein L14</fullName>
    </alternativeName>
</protein>
<keyword id="KW-1185">Reference proteome</keyword>
<keyword id="KW-0687">Ribonucleoprotein</keyword>
<keyword id="KW-0689">Ribosomal protein</keyword>
<keyword id="KW-0694">RNA-binding</keyword>
<keyword id="KW-0699">rRNA-binding</keyword>
<accession>O32993</accession>
<reference key="1">
    <citation type="journal article" date="2001" name="Nature">
        <title>Massive gene decay in the leprosy bacillus.</title>
        <authorList>
            <person name="Cole S.T."/>
            <person name="Eiglmeier K."/>
            <person name="Parkhill J."/>
            <person name="James K.D."/>
            <person name="Thomson N.R."/>
            <person name="Wheeler P.R."/>
            <person name="Honore N."/>
            <person name="Garnier T."/>
            <person name="Churcher C.M."/>
            <person name="Harris D.E."/>
            <person name="Mungall K.L."/>
            <person name="Basham D."/>
            <person name="Brown D."/>
            <person name="Chillingworth T."/>
            <person name="Connor R."/>
            <person name="Davies R.M."/>
            <person name="Devlin K."/>
            <person name="Duthoy S."/>
            <person name="Feltwell T."/>
            <person name="Fraser A."/>
            <person name="Hamlin N."/>
            <person name="Holroyd S."/>
            <person name="Hornsby T."/>
            <person name="Jagels K."/>
            <person name="Lacroix C."/>
            <person name="Maclean J."/>
            <person name="Moule S."/>
            <person name="Murphy L.D."/>
            <person name="Oliver K."/>
            <person name="Quail M.A."/>
            <person name="Rajandream M.A."/>
            <person name="Rutherford K.M."/>
            <person name="Rutter S."/>
            <person name="Seeger K."/>
            <person name="Simon S."/>
            <person name="Simmonds M."/>
            <person name="Skelton J."/>
            <person name="Squares R."/>
            <person name="Squares S."/>
            <person name="Stevens K."/>
            <person name="Taylor K."/>
            <person name="Whitehead S."/>
            <person name="Woodward J.R."/>
            <person name="Barrell B.G."/>
        </authorList>
    </citation>
    <scope>NUCLEOTIDE SEQUENCE [LARGE SCALE GENOMIC DNA]</scope>
    <source>
        <strain>TN</strain>
    </source>
</reference>
<gene>
    <name evidence="1" type="primary">rplN</name>
    <name type="ordered locus">ML1849</name>
    <name type="ORF">MLCB2492.14</name>
</gene>
<dbReference type="EMBL" id="Z98756">
    <property type="protein sequence ID" value="CAB11446.1"/>
    <property type="molecule type" value="Genomic_DNA"/>
</dbReference>
<dbReference type="EMBL" id="AL583923">
    <property type="protein sequence ID" value="CAC30803.1"/>
    <property type="status" value="ALT_INIT"/>
    <property type="molecule type" value="Genomic_DNA"/>
</dbReference>
<dbReference type="PIR" id="C87140">
    <property type="entry name" value="C87140"/>
</dbReference>
<dbReference type="PIR" id="T45376">
    <property type="entry name" value="T45376"/>
</dbReference>
<dbReference type="RefSeq" id="WP_041323021.1">
    <property type="nucleotide sequence ID" value="NC_002677.1"/>
</dbReference>
<dbReference type="SMR" id="O32993"/>
<dbReference type="STRING" id="272631.gene:17575697"/>
<dbReference type="KEGG" id="mle:ML1849"/>
<dbReference type="Leproma" id="ML1849"/>
<dbReference type="eggNOG" id="COG0093">
    <property type="taxonomic scope" value="Bacteria"/>
</dbReference>
<dbReference type="HOGENOM" id="CLU_095071_2_1_11"/>
<dbReference type="Proteomes" id="UP000000806">
    <property type="component" value="Chromosome"/>
</dbReference>
<dbReference type="GO" id="GO:0022625">
    <property type="term" value="C:cytosolic large ribosomal subunit"/>
    <property type="evidence" value="ECO:0007669"/>
    <property type="project" value="TreeGrafter"/>
</dbReference>
<dbReference type="GO" id="GO:0070180">
    <property type="term" value="F:large ribosomal subunit rRNA binding"/>
    <property type="evidence" value="ECO:0007669"/>
    <property type="project" value="TreeGrafter"/>
</dbReference>
<dbReference type="GO" id="GO:0003735">
    <property type="term" value="F:structural constituent of ribosome"/>
    <property type="evidence" value="ECO:0007669"/>
    <property type="project" value="InterPro"/>
</dbReference>
<dbReference type="GO" id="GO:0006412">
    <property type="term" value="P:translation"/>
    <property type="evidence" value="ECO:0007669"/>
    <property type="project" value="UniProtKB-UniRule"/>
</dbReference>
<dbReference type="CDD" id="cd00337">
    <property type="entry name" value="Ribosomal_uL14"/>
    <property type="match status" value="1"/>
</dbReference>
<dbReference type="FunFam" id="2.40.150.20:FF:000001">
    <property type="entry name" value="50S ribosomal protein L14"/>
    <property type="match status" value="1"/>
</dbReference>
<dbReference type="Gene3D" id="2.40.150.20">
    <property type="entry name" value="Ribosomal protein L14"/>
    <property type="match status" value="1"/>
</dbReference>
<dbReference type="HAMAP" id="MF_01367">
    <property type="entry name" value="Ribosomal_uL14"/>
    <property type="match status" value="1"/>
</dbReference>
<dbReference type="InterPro" id="IPR000218">
    <property type="entry name" value="Ribosomal_uL14"/>
</dbReference>
<dbReference type="InterPro" id="IPR005745">
    <property type="entry name" value="Ribosomal_uL14_bac-type"/>
</dbReference>
<dbReference type="InterPro" id="IPR019972">
    <property type="entry name" value="Ribosomal_uL14_CS"/>
</dbReference>
<dbReference type="InterPro" id="IPR036853">
    <property type="entry name" value="Ribosomal_uL14_sf"/>
</dbReference>
<dbReference type="NCBIfam" id="TIGR01067">
    <property type="entry name" value="rplN_bact"/>
    <property type="match status" value="1"/>
</dbReference>
<dbReference type="PANTHER" id="PTHR11761">
    <property type="entry name" value="50S/60S RIBOSOMAL PROTEIN L14/L23"/>
    <property type="match status" value="1"/>
</dbReference>
<dbReference type="PANTHER" id="PTHR11761:SF3">
    <property type="entry name" value="LARGE RIBOSOMAL SUBUNIT PROTEIN UL14M"/>
    <property type="match status" value="1"/>
</dbReference>
<dbReference type="Pfam" id="PF00238">
    <property type="entry name" value="Ribosomal_L14"/>
    <property type="match status" value="1"/>
</dbReference>
<dbReference type="SMART" id="SM01374">
    <property type="entry name" value="Ribosomal_L14"/>
    <property type="match status" value="1"/>
</dbReference>
<dbReference type="SUPFAM" id="SSF50193">
    <property type="entry name" value="Ribosomal protein L14"/>
    <property type="match status" value="1"/>
</dbReference>
<dbReference type="PROSITE" id="PS00049">
    <property type="entry name" value="RIBOSOMAL_L14"/>
    <property type="match status" value="1"/>
</dbReference>